<organism>
    <name type="scientific">Clostridium acetobutylicum (strain ATCC 824 / DSM 792 / JCM 1419 / IAM 19013 / LMG 5710 / NBRC 13948 / NRRL B-527 / VKM B-1787 / 2291 / W)</name>
    <dbReference type="NCBI Taxonomy" id="272562"/>
    <lineage>
        <taxon>Bacteria</taxon>
        <taxon>Bacillati</taxon>
        <taxon>Bacillota</taxon>
        <taxon>Clostridia</taxon>
        <taxon>Eubacteriales</taxon>
        <taxon>Clostridiaceae</taxon>
        <taxon>Clostridium</taxon>
    </lineage>
</organism>
<sequence length="333" mass="36140">MDLIESIWECAKQDKKRIILAEGEEKRNLIAADKIIKEGLAELVLVGDENKIKEKASELNLDISKAEIMDPETSLKTETYARDFYELRKHKGMTIEKSEKMVRDPLYFATMALKDGYVDGMVSGAVHTTGDLLRPGLQIIKTAPGVKIVSGFFVMIIPDCDYGEEGLLLFADCAVNPNPTSDELADIAITTAETARKLCNVEPKVAMLSFSTMGSAKGEMVDKVKNAVEITKKFRPDLAIDGELQLDAAIDSEVAALKAPSSNVAGNANVLVFPDLQTGNIGYKLVQRFAKAKAIGPICQGFAKPINDLSRGCSSEDIVNVVAITVVQAQRGI</sequence>
<protein>
    <recommendedName>
        <fullName>Phosphate acetyltransferase</fullName>
        <ecNumber>2.3.1.8</ecNumber>
    </recommendedName>
    <alternativeName>
        <fullName>Phosphotransacetylase</fullName>
    </alternativeName>
</protein>
<gene>
    <name type="primary">pta</name>
    <name type="ordered locus">CA_C1742</name>
</gene>
<comment type="catalytic activity">
    <reaction>
        <text>acetyl-CoA + phosphate = acetyl phosphate + CoA</text>
        <dbReference type="Rhea" id="RHEA:19521"/>
        <dbReference type="ChEBI" id="CHEBI:22191"/>
        <dbReference type="ChEBI" id="CHEBI:43474"/>
        <dbReference type="ChEBI" id="CHEBI:57287"/>
        <dbReference type="ChEBI" id="CHEBI:57288"/>
        <dbReference type="EC" id="2.3.1.8"/>
    </reaction>
</comment>
<comment type="pathway">
    <text>Metabolic intermediate biosynthesis; acetyl-CoA biosynthesis; acetyl-CoA from acetate: step 2/2.</text>
</comment>
<comment type="subcellular location">
    <subcellularLocation>
        <location evidence="1">Cytoplasm</location>
    </subcellularLocation>
</comment>
<comment type="similarity">
    <text evidence="1">Belongs to the phosphate acetyltransferase and butyryltransferase family.</text>
</comment>
<proteinExistence type="inferred from homology"/>
<feature type="chain" id="PRO_0000179125" description="Phosphate acetyltransferase">
    <location>
        <begin position="1"/>
        <end position="333"/>
    </location>
</feature>
<feature type="sequence conflict" description="In Ref. 1; AAB18300." evidence="1" ref="1">
    <original>S</original>
    <variation>G</variation>
    <location>
        <position position="215"/>
    </location>
</feature>
<feature type="sequence conflict" description="In Ref. 1; AAB18300." evidence="1" ref="1">
    <original>D</original>
    <variation>H</variation>
    <location>
        <position position="237"/>
    </location>
</feature>
<feature type="sequence conflict" description="In Ref. 1; AAB18300." evidence="1" ref="1">
    <original>G</original>
    <variation>S</variation>
    <location>
        <position position="312"/>
    </location>
</feature>
<dbReference type="EC" id="2.3.1.8"/>
<dbReference type="EMBL" id="U38234">
    <property type="protein sequence ID" value="AAB18300.1"/>
    <property type="molecule type" value="Genomic_DNA"/>
</dbReference>
<dbReference type="EMBL" id="AE001437">
    <property type="protein sequence ID" value="AAK79708.1"/>
    <property type="molecule type" value="Genomic_DNA"/>
</dbReference>
<dbReference type="PIR" id="A97115">
    <property type="entry name" value="A97115"/>
</dbReference>
<dbReference type="RefSeq" id="NP_348368.1">
    <property type="nucleotide sequence ID" value="NC_003030.1"/>
</dbReference>
<dbReference type="RefSeq" id="WP_010965049.1">
    <property type="nucleotide sequence ID" value="NC_003030.1"/>
</dbReference>
<dbReference type="SMR" id="P71103"/>
<dbReference type="STRING" id="272562.CA_C1742"/>
<dbReference type="GeneID" id="44998237"/>
<dbReference type="KEGG" id="cac:CA_C1742"/>
<dbReference type="PATRIC" id="fig|272562.8.peg.1944"/>
<dbReference type="eggNOG" id="COG0280">
    <property type="taxonomic scope" value="Bacteria"/>
</dbReference>
<dbReference type="HOGENOM" id="CLU_019723_0_1_9"/>
<dbReference type="OrthoDB" id="9805787at2"/>
<dbReference type="BioCyc" id="MetaCyc:PTACLOS-MONOMER"/>
<dbReference type="UniPathway" id="UPA00340">
    <property type="reaction ID" value="UER00459"/>
</dbReference>
<dbReference type="Proteomes" id="UP000000814">
    <property type="component" value="Chromosome"/>
</dbReference>
<dbReference type="GO" id="GO:0005737">
    <property type="term" value="C:cytoplasm"/>
    <property type="evidence" value="ECO:0007669"/>
    <property type="project" value="UniProtKB-SubCell"/>
</dbReference>
<dbReference type="GO" id="GO:0008959">
    <property type="term" value="F:phosphate acetyltransferase activity"/>
    <property type="evidence" value="ECO:0007669"/>
    <property type="project" value="UniProtKB-EC"/>
</dbReference>
<dbReference type="GO" id="GO:0019413">
    <property type="term" value="P:acetate biosynthetic process"/>
    <property type="evidence" value="ECO:0000314"/>
    <property type="project" value="MENGO"/>
</dbReference>
<dbReference type="GO" id="GO:0006085">
    <property type="term" value="P:acetyl-CoA biosynthetic process"/>
    <property type="evidence" value="ECO:0007669"/>
    <property type="project" value="UniProtKB-UniPathway"/>
</dbReference>
<dbReference type="Gene3D" id="3.40.50.10950">
    <property type="match status" value="1"/>
</dbReference>
<dbReference type="Gene3D" id="3.40.50.10750">
    <property type="entry name" value="Isocitrate/Isopropylmalate dehydrogenase-like"/>
    <property type="match status" value="1"/>
</dbReference>
<dbReference type="InterPro" id="IPR012147">
    <property type="entry name" value="P_Ac_Bu_trans"/>
</dbReference>
<dbReference type="InterPro" id="IPR004614">
    <property type="entry name" value="P_AcTrfase"/>
</dbReference>
<dbReference type="InterPro" id="IPR042113">
    <property type="entry name" value="P_AcTrfase_dom1"/>
</dbReference>
<dbReference type="InterPro" id="IPR042112">
    <property type="entry name" value="P_AcTrfase_dom2"/>
</dbReference>
<dbReference type="InterPro" id="IPR050500">
    <property type="entry name" value="Phos_Acetyltrans/Butyryltrans"/>
</dbReference>
<dbReference type="InterPro" id="IPR002505">
    <property type="entry name" value="PTA_PTB"/>
</dbReference>
<dbReference type="NCBIfam" id="NF004167">
    <property type="entry name" value="PRK05632.1"/>
    <property type="match status" value="1"/>
</dbReference>
<dbReference type="NCBIfam" id="NF007233">
    <property type="entry name" value="PRK09653.1"/>
    <property type="match status" value="1"/>
</dbReference>
<dbReference type="NCBIfam" id="TIGR00651">
    <property type="entry name" value="pta"/>
    <property type="match status" value="1"/>
</dbReference>
<dbReference type="PANTHER" id="PTHR43356">
    <property type="entry name" value="PHOSPHATE ACETYLTRANSFERASE"/>
    <property type="match status" value="1"/>
</dbReference>
<dbReference type="PANTHER" id="PTHR43356:SF3">
    <property type="entry name" value="PHOSPHATE ACETYLTRANSFERASE"/>
    <property type="match status" value="1"/>
</dbReference>
<dbReference type="Pfam" id="PF01515">
    <property type="entry name" value="PTA_PTB"/>
    <property type="match status" value="1"/>
</dbReference>
<dbReference type="PIRSF" id="PIRSF000428">
    <property type="entry name" value="P_Ac_trans"/>
    <property type="match status" value="1"/>
</dbReference>
<dbReference type="SUPFAM" id="SSF53659">
    <property type="entry name" value="Isocitrate/Isopropylmalate dehydrogenase-like"/>
    <property type="match status" value="1"/>
</dbReference>
<evidence type="ECO:0000305" key="1"/>
<keyword id="KW-0012">Acyltransferase</keyword>
<keyword id="KW-0963">Cytoplasm</keyword>
<keyword id="KW-1185">Reference proteome</keyword>
<keyword id="KW-0808">Transferase</keyword>
<accession>P71103</accession>
<reference key="1">
    <citation type="journal article" date="1996" name="Appl. Environ. Microbiol.">
        <title>Cloning, sequencing, and expression of genes encoding phosphotransacetylase and acetate kinase from Clostridium acetobutylicum ATCC 824.</title>
        <authorList>
            <person name="Boynton Z.L."/>
            <person name="Bennett G.N."/>
            <person name="Rudolph F.B."/>
        </authorList>
    </citation>
    <scope>NUCLEOTIDE SEQUENCE [GENOMIC DNA]</scope>
    <source>
        <strain>ATCC 824 / DSM 792 / JCM 1419 / IAM 19013 / LMG 5710 / NBRC 13948 / NRRL B-527 / VKM B-1787 / 2291 / W</strain>
    </source>
</reference>
<reference key="2">
    <citation type="journal article" date="2001" name="J. Bacteriol.">
        <title>Genome sequence and comparative analysis of the solvent-producing bacterium Clostridium acetobutylicum.</title>
        <authorList>
            <person name="Noelling J."/>
            <person name="Breton G."/>
            <person name="Omelchenko M.V."/>
            <person name="Makarova K.S."/>
            <person name="Zeng Q."/>
            <person name="Gibson R."/>
            <person name="Lee H.M."/>
            <person name="Dubois J."/>
            <person name="Qiu D."/>
            <person name="Hitti J."/>
            <person name="Wolf Y.I."/>
            <person name="Tatusov R.L."/>
            <person name="Sabathe F."/>
            <person name="Doucette-Stamm L.A."/>
            <person name="Soucaille P."/>
            <person name="Daly M.J."/>
            <person name="Bennett G.N."/>
            <person name="Koonin E.V."/>
            <person name="Smith D.R."/>
        </authorList>
    </citation>
    <scope>NUCLEOTIDE SEQUENCE [LARGE SCALE GENOMIC DNA]</scope>
    <source>
        <strain>ATCC 824 / DSM 792 / JCM 1419 / IAM 19013 / LMG 5710 / NBRC 13948 / NRRL B-527 / VKM B-1787 / 2291 / W</strain>
    </source>
</reference>
<name>PTAS_CLOAB</name>